<feature type="chain" id="PRO_0000287795" description="Siroheme decarboxylase NirH subunit">
    <location>
        <begin position="1"/>
        <end position="171"/>
    </location>
</feature>
<gene>
    <name evidence="3" type="primary">nirH</name>
    <name type="ordered locus">PA0512</name>
</gene>
<proteinExistence type="inferred from homology"/>
<comment type="function">
    <text evidence="1 2">Involved in heme d1 biosynthesis (PubMed:8982003). Catalyzes the decarboxylation of siroheme into didecarboxysiroheme (By similarity).</text>
</comment>
<comment type="catalytic activity">
    <reaction evidence="1">
        <text>siroheme + 2 H(+) = 12,18-didecarboxysiroheme + 2 CO2</text>
        <dbReference type="Rhea" id="RHEA:19093"/>
        <dbReference type="ChEBI" id="CHEBI:15378"/>
        <dbReference type="ChEBI" id="CHEBI:16526"/>
        <dbReference type="ChEBI" id="CHEBI:60052"/>
        <dbReference type="ChEBI" id="CHEBI:140497"/>
        <dbReference type="EC" id="4.1.1.111"/>
    </reaction>
</comment>
<comment type="pathway">
    <text evidence="5">Porphyrin-containing compound metabolism.</text>
</comment>
<comment type="subunit">
    <text evidence="1">Probably forms a complex composed of NirD, NirL, NirG and NirH. All proteins are required for the total conversion of siroheme to didecarboxysiroheme.</text>
</comment>
<comment type="disruption phenotype">
    <text evidence="2">The nirDLGH mutant lacks dissimilatory nitrite reductase (NIR) activity. The NIR activity is restored by adding purified heme d1.</text>
</comment>
<comment type="similarity">
    <text evidence="4">Belongs to the Ahb/Nir family.</text>
</comment>
<accession>P95415</accession>
<accession>Q7DCL5</accession>
<reference key="1">
    <citation type="journal article" date="1997" name="J. Bacteriol.">
        <title>Gene cluster for dissimilatory nitrite reductase (nir) from Pseudomonas aeruginosa: sequencing and identification of a locus for heme d1 biosynthesis.</title>
        <authorList>
            <person name="Kawasaki S."/>
            <person name="Arai H."/>
            <person name="Kodama T."/>
            <person name="Igarashi Y."/>
        </authorList>
    </citation>
    <scope>NUCLEOTIDE SEQUENCE [GENOMIC DNA]</scope>
    <scope>FUNCTION</scope>
    <scope>PATHWAY</scope>
    <scope>DISRUPTION PHENOTYPE</scope>
    <source>
        <strain>ATCC 15692 / DSM 22644 / CIP 104116 / JCM 14847 / LMG 12228 / 1C / PRS 101 / PAO1</strain>
    </source>
</reference>
<reference key="2">
    <citation type="journal article" date="2000" name="Nature">
        <title>Complete genome sequence of Pseudomonas aeruginosa PAO1, an opportunistic pathogen.</title>
        <authorList>
            <person name="Stover C.K."/>
            <person name="Pham X.-Q.T."/>
            <person name="Erwin A.L."/>
            <person name="Mizoguchi S.D."/>
            <person name="Warrener P."/>
            <person name="Hickey M.J."/>
            <person name="Brinkman F.S.L."/>
            <person name="Hufnagle W.O."/>
            <person name="Kowalik D.J."/>
            <person name="Lagrou M."/>
            <person name="Garber R.L."/>
            <person name="Goltry L."/>
            <person name="Tolentino E."/>
            <person name="Westbrock-Wadman S."/>
            <person name="Yuan Y."/>
            <person name="Brody L.L."/>
            <person name="Coulter S.N."/>
            <person name="Folger K.R."/>
            <person name="Kas A."/>
            <person name="Larbig K."/>
            <person name="Lim R.M."/>
            <person name="Smith K.A."/>
            <person name="Spencer D.H."/>
            <person name="Wong G.K.-S."/>
            <person name="Wu Z."/>
            <person name="Paulsen I.T."/>
            <person name="Reizer J."/>
            <person name="Saier M.H. Jr."/>
            <person name="Hancock R.E.W."/>
            <person name="Lory S."/>
            <person name="Olson M.V."/>
        </authorList>
    </citation>
    <scope>NUCLEOTIDE SEQUENCE [LARGE SCALE GENOMIC DNA]</scope>
    <source>
        <strain>ATCC 15692 / DSM 22644 / CIP 104116 / JCM 14847 / LMG 12228 / 1C / PRS 101 / PAO1</strain>
    </source>
</reference>
<keyword id="KW-0456">Lyase</keyword>
<keyword id="KW-1185">Reference proteome</keyword>
<organism>
    <name type="scientific">Pseudomonas aeruginosa (strain ATCC 15692 / DSM 22644 / CIP 104116 / JCM 14847 / LMG 12228 / 1C / PRS 101 / PAO1)</name>
    <dbReference type="NCBI Taxonomy" id="208964"/>
    <lineage>
        <taxon>Bacteria</taxon>
        <taxon>Pseudomonadati</taxon>
        <taxon>Pseudomonadota</taxon>
        <taxon>Gammaproteobacteria</taxon>
        <taxon>Pseudomonadales</taxon>
        <taxon>Pseudomonadaceae</taxon>
        <taxon>Pseudomonas</taxon>
    </lineage>
</organism>
<protein>
    <recommendedName>
        <fullName evidence="1">Siroheme decarboxylase NirH subunit</fullName>
        <ecNumber evidence="1">4.1.1.111</ecNumber>
    </recommendedName>
</protein>
<sequence>MSACISPSDALLARRLIELTQAGLPLVADPWAWIAAQLRLSEAETLALLKRLRDAGVIRRIAAVPNHYRLGYRHNGMTVWDVADERIERLGRLVGGLSFVSHCYRRPRHLPQWRYNLFAMVHGRSEAEIEGYRQQIRLLLGEDCRADEMLVSSRILKKTGLRLAQKEERPC</sequence>
<dbReference type="EC" id="4.1.1.111" evidence="1"/>
<dbReference type="EMBL" id="D84475">
    <property type="protein sequence ID" value="BAA12680.1"/>
    <property type="molecule type" value="Genomic_DNA"/>
</dbReference>
<dbReference type="EMBL" id="AE004091">
    <property type="protein sequence ID" value="AAG03901.1"/>
    <property type="molecule type" value="Genomic_DNA"/>
</dbReference>
<dbReference type="PIR" id="D83581">
    <property type="entry name" value="D83581"/>
</dbReference>
<dbReference type="RefSeq" id="NP_249203.1">
    <property type="nucleotide sequence ID" value="NC_002516.2"/>
</dbReference>
<dbReference type="RefSeq" id="WP_003084858.1">
    <property type="nucleotide sequence ID" value="NZ_QZGE01000010.1"/>
</dbReference>
<dbReference type="SMR" id="P95415"/>
<dbReference type="STRING" id="208964.PA0512"/>
<dbReference type="PaxDb" id="208964-PA0512"/>
<dbReference type="DNASU" id="877584"/>
<dbReference type="GeneID" id="877584"/>
<dbReference type="KEGG" id="pae:PA0512"/>
<dbReference type="PATRIC" id="fig|208964.12.peg.542"/>
<dbReference type="PseudoCAP" id="PA0512"/>
<dbReference type="HOGENOM" id="CLU_112007_0_0_6"/>
<dbReference type="InParanoid" id="P95415"/>
<dbReference type="OrthoDB" id="5568033at2"/>
<dbReference type="PhylomeDB" id="P95415"/>
<dbReference type="BioCyc" id="PAER208964:G1FZ6-517-MONOMER"/>
<dbReference type="Proteomes" id="UP000002438">
    <property type="component" value="Chromosome"/>
</dbReference>
<dbReference type="GO" id="GO:0016829">
    <property type="term" value="F:lyase activity"/>
    <property type="evidence" value="ECO:0007669"/>
    <property type="project" value="UniProtKB-KW"/>
</dbReference>
<dbReference type="GO" id="GO:0006783">
    <property type="term" value="P:heme biosynthetic process"/>
    <property type="evidence" value="ECO:0000315"/>
    <property type="project" value="PseudoCAP"/>
</dbReference>
<dbReference type="FunFam" id="3.30.70.3460:FF:000002">
    <property type="entry name" value="Heme d1 biosynthesis protein NirH"/>
    <property type="match status" value="1"/>
</dbReference>
<dbReference type="Gene3D" id="3.30.70.3460">
    <property type="match status" value="1"/>
</dbReference>
<dbReference type="InterPro" id="IPR040523">
    <property type="entry name" value="AsnC_trans_reg2"/>
</dbReference>
<dbReference type="InterPro" id="IPR050684">
    <property type="entry name" value="HTH-Siroheme_Decarb"/>
</dbReference>
<dbReference type="InterPro" id="IPR053953">
    <property type="entry name" value="NirdL-like_HTH"/>
</dbReference>
<dbReference type="PANTHER" id="PTHR43413:SF1">
    <property type="entry name" value="SIROHEME DECARBOXYLASE NIRL SUBUNIT"/>
    <property type="match status" value="1"/>
</dbReference>
<dbReference type="PANTHER" id="PTHR43413">
    <property type="entry name" value="TRANSCRIPTIONAL REGULATOR, ASNC FAMILY"/>
    <property type="match status" value="1"/>
</dbReference>
<dbReference type="Pfam" id="PF17805">
    <property type="entry name" value="AsnC_trans_reg2"/>
    <property type="match status" value="1"/>
</dbReference>
<dbReference type="Pfam" id="PF22451">
    <property type="entry name" value="NirdL-like_HTH"/>
    <property type="match status" value="1"/>
</dbReference>
<name>NIRH_PSEAE</name>
<evidence type="ECO:0000250" key="1">
    <source>
        <dbReference type="UniProtKB" id="I6UF18"/>
    </source>
</evidence>
<evidence type="ECO:0000269" key="2">
    <source>
    </source>
</evidence>
<evidence type="ECO:0000303" key="3">
    <source>
    </source>
</evidence>
<evidence type="ECO:0000305" key="4"/>
<evidence type="ECO:0000305" key="5">
    <source>
    </source>
</evidence>